<dbReference type="EC" id="2.5.1.75" evidence="1"/>
<dbReference type="EMBL" id="CP001283">
    <property type="protein sequence ID" value="ACK87290.1"/>
    <property type="molecule type" value="Genomic_DNA"/>
</dbReference>
<dbReference type="RefSeq" id="WP_000504952.1">
    <property type="nucleotide sequence ID" value="NC_011773.1"/>
</dbReference>
<dbReference type="KEGG" id="bcu:BCAH820_3723"/>
<dbReference type="HOGENOM" id="CLU_032616_0_1_9"/>
<dbReference type="Proteomes" id="UP000001363">
    <property type="component" value="Chromosome"/>
</dbReference>
<dbReference type="GO" id="GO:0005524">
    <property type="term" value="F:ATP binding"/>
    <property type="evidence" value="ECO:0007669"/>
    <property type="project" value="UniProtKB-UniRule"/>
</dbReference>
<dbReference type="GO" id="GO:0052381">
    <property type="term" value="F:tRNA dimethylallyltransferase activity"/>
    <property type="evidence" value="ECO:0007669"/>
    <property type="project" value="UniProtKB-UniRule"/>
</dbReference>
<dbReference type="GO" id="GO:0006400">
    <property type="term" value="P:tRNA modification"/>
    <property type="evidence" value="ECO:0007669"/>
    <property type="project" value="TreeGrafter"/>
</dbReference>
<dbReference type="FunFam" id="1.10.20.140:FF:000001">
    <property type="entry name" value="tRNA dimethylallyltransferase"/>
    <property type="match status" value="1"/>
</dbReference>
<dbReference type="Gene3D" id="1.10.20.140">
    <property type="match status" value="1"/>
</dbReference>
<dbReference type="Gene3D" id="3.40.50.300">
    <property type="entry name" value="P-loop containing nucleotide triphosphate hydrolases"/>
    <property type="match status" value="1"/>
</dbReference>
<dbReference type="HAMAP" id="MF_00185">
    <property type="entry name" value="IPP_trans"/>
    <property type="match status" value="1"/>
</dbReference>
<dbReference type="InterPro" id="IPR039657">
    <property type="entry name" value="Dimethylallyltransferase"/>
</dbReference>
<dbReference type="InterPro" id="IPR018022">
    <property type="entry name" value="IPT"/>
</dbReference>
<dbReference type="InterPro" id="IPR027417">
    <property type="entry name" value="P-loop_NTPase"/>
</dbReference>
<dbReference type="NCBIfam" id="TIGR00174">
    <property type="entry name" value="miaA"/>
    <property type="match status" value="1"/>
</dbReference>
<dbReference type="PANTHER" id="PTHR11088">
    <property type="entry name" value="TRNA DIMETHYLALLYLTRANSFERASE"/>
    <property type="match status" value="1"/>
</dbReference>
<dbReference type="PANTHER" id="PTHR11088:SF60">
    <property type="entry name" value="TRNA DIMETHYLALLYLTRANSFERASE"/>
    <property type="match status" value="1"/>
</dbReference>
<dbReference type="Pfam" id="PF01715">
    <property type="entry name" value="IPPT"/>
    <property type="match status" value="1"/>
</dbReference>
<dbReference type="SUPFAM" id="SSF52540">
    <property type="entry name" value="P-loop containing nucleoside triphosphate hydrolases"/>
    <property type="match status" value="2"/>
</dbReference>
<proteinExistence type="inferred from homology"/>
<evidence type="ECO:0000255" key="1">
    <source>
        <dbReference type="HAMAP-Rule" id="MF_00185"/>
    </source>
</evidence>
<comment type="function">
    <text evidence="1">Catalyzes the transfer of a dimethylallyl group onto the adenine at position 37 in tRNAs that read codons beginning with uridine, leading to the formation of N6-(dimethylallyl)adenosine (i(6)A).</text>
</comment>
<comment type="catalytic activity">
    <reaction evidence="1">
        <text>adenosine(37) in tRNA + dimethylallyl diphosphate = N(6)-dimethylallyladenosine(37) in tRNA + diphosphate</text>
        <dbReference type="Rhea" id="RHEA:26482"/>
        <dbReference type="Rhea" id="RHEA-COMP:10162"/>
        <dbReference type="Rhea" id="RHEA-COMP:10375"/>
        <dbReference type="ChEBI" id="CHEBI:33019"/>
        <dbReference type="ChEBI" id="CHEBI:57623"/>
        <dbReference type="ChEBI" id="CHEBI:74411"/>
        <dbReference type="ChEBI" id="CHEBI:74415"/>
        <dbReference type="EC" id="2.5.1.75"/>
    </reaction>
</comment>
<comment type="cofactor">
    <cofactor evidence="1">
        <name>Mg(2+)</name>
        <dbReference type="ChEBI" id="CHEBI:18420"/>
    </cofactor>
</comment>
<comment type="subunit">
    <text evidence="1">Monomer.</text>
</comment>
<comment type="similarity">
    <text evidence="1">Belongs to the IPP transferase family.</text>
</comment>
<accession>B7JIE1</accession>
<name>MIAA_BACC0</name>
<gene>
    <name evidence="1" type="primary">miaA</name>
    <name type="ordered locus">BCAH820_3723</name>
</gene>
<sequence length="317" mass="36618">MGEVQREKVAVIIGPTAVGKTKLSIDLAKALNGEIISGDSMQIYRTMDIGTAKVTKEEVDGIPHYMVDIKNPEESFSVAEFQERVRKHIREITERGKLPIIVGGTGLYIQSVLFDYQFTDDAGDAIYREQMEKLALERGVEYVHKKLQEVDPESAERIHANNVRRVIRALEIFHTSGEKMSDQLEKQENELLYDVSLIGLTMDREMLYDRINLRVDIMMDQGLLEEVEGLYNRGIRDCQSIQAIGYKEIYDYFEDRVSLEEAVSQLKTNSRRYAKRQLTWFRNKMDVTWFDVTDGEKTSEILRYXEGKLQLKSNNSK</sequence>
<protein>
    <recommendedName>
        <fullName evidence="1">tRNA dimethylallyltransferase</fullName>
        <ecNumber evidence="1">2.5.1.75</ecNumber>
    </recommendedName>
    <alternativeName>
        <fullName evidence="1">Dimethylallyl diphosphate:tRNA dimethylallyltransferase</fullName>
        <shortName evidence="1">DMAPP:tRNA dimethylallyltransferase</shortName>
        <shortName evidence="1">DMATase</shortName>
    </alternativeName>
    <alternativeName>
        <fullName evidence="1">Isopentenyl-diphosphate:tRNA isopentenyltransferase</fullName>
        <shortName evidence="1">IPP transferase</shortName>
        <shortName evidence="1">IPPT</shortName>
        <shortName evidence="1">IPTase</shortName>
    </alternativeName>
</protein>
<reference key="1">
    <citation type="submission" date="2008-10" db="EMBL/GenBank/DDBJ databases">
        <title>Genome sequence of Bacillus cereus AH820.</title>
        <authorList>
            <person name="Dodson R.J."/>
            <person name="Durkin A.S."/>
            <person name="Rosovitz M.J."/>
            <person name="Rasko D.A."/>
            <person name="Hoffmaster A."/>
            <person name="Ravel J."/>
            <person name="Sutton G."/>
        </authorList>
    </citation>
    <scope>NUCLEOTIDE SEQUENCE [LARGE SCALE GENOMIC DNA]</scope>
    <source>
        <strain>AH820</strain>
    </source>
</reference>
<organism>
    <name type="scientific">Bacillus cereus (strain AH820)</name>
    <dbReference type="NCBI Taxonomy" id="405535"/>
    <lineage>
        <taxon>Bacteria</taxon>
        <taxon>Bacillati</taxon>
        <taxon>Bacillota</taxon>
        <taxon>Bacilli</taxon>
        <taxon>Bacillales</taxon>
        <taxon>Bacillaceae</taxon>
        <taxon>Bacillus</taxon>
        <taxon>Bacillus cereus group</taxon>
    </lineage>
</organism>
<feature type="chain" id="PRO_1000118516" description="tRNA dimethylallyltransferase">
    <location>
        <begin position="1"/>
        <end position="317"/>
    </location>
</feature>
<feature type="region of interest" description="Interaction with substrate tRNA" evidence="1">
    <location>
        <begin position="39"/>
        <end position="42"/>
    </location>
</feature>
<feature type="binding site" evidence="1">
    <location>
        <begin position="14"/>
        <end position="21"/>
    </location>
    <ligand>
        <name>ATP</name>
        <dbReference type="ChEBI" id="CHEBI:30616"/>
    </ligand>
</feature>
<feature type="binding site" evidence="1">
    <location>
        <begin position="16"/>
        <end position="21"/>
    </location>
    <ligand>
        <name>substrate</name>
    </ligand>
</feature>
<feature type="site" description="Interaction with substrate tRNA" evidence="1">
    <location>
        <position position="105"/>
    </location>
</feature>
<feature type="site" description="Interaction with substrate tRNA" evidence="1">
    <location>
        <position position="128"/>
    </location>
</feature>
<keyword id="KW-0067">ATP-binding</keyword>
<keyword id="KW-0460">Magnesium</keyword>
<keyword id="KW-0547">Nucleotide-binding</keyword>
<keyword id="KW-0808">Transferase</keyword>
<keyword id="KW-0819">tRNA processing</keyword>